<gene>
    <name evidence="1" type="primary">lolA</name>
    <name type="ordered locus">APP7_0552</name>
</gene>
<keyword id="KW-0143">Chaperone</keyword>
<keyword id="KW-0574">Periplasm</keyword>
<keyword id="KW-0653">Protein transport</keyword>
<keyword id="KW-0732">Signal</keyword>
<keyword id="KW-0813">Transport</keyword>
<organism>
    <name type="scientific">Actinobacillus pleuropneumoniae serotype 7 (strain AP76)</name>
    <dbReference type="NCBI Taxonomy" id="537457"/>
    <lineage>
        <taxon>Bacteria</taxon>
        <taxon>Pseudomonadati</taxon>
        <taxon>Pseudomonadota</taxon>
        <taxon>Gammaproteobacteria</taxon>
        <taxon>Pasteurellales</taxon>
        <taxon>Pasteurellaceae</taxon>
        <taxon>Actinobacillus</taxon>
    </lineage>
</organism>
<proteinExistence type="inferred from homology"/>
<protein>
    <recommendedName>
        <fullName evidence="1">Outer-membrane lipoprotein carrier protein</fullName>
    </recommendedName>
</protein>
<evidence type="ECO:0000255" key="1">
    <source>
        <dbReference type="HAMAP-Rule" id="MF_00240"/>
    </source>
</evidence>
<accession>B3GX52</accession>
<reference key="1">
    <citation type="submission" date="2008-06" db="EMBL/GenBank/DDBJ databases">
        <title>Genome and proteome analysis of A. pleuropneumoniae serotype 7.</title>
        <authorList>
            <person name="Linke B."/>
            <person name="Buettner F."/>
            <person name="Martinez-Arias R."/>
            <person name="Goesmann A."/>
            <person name="Baltes N."/>
            <person name="Tegetmeyer H."/>
            <person name="Singh M."/>
            <person name="Gerlach G.F."/>
        </authorList>
    </citation>
    <scope>NUCLEOTIDE SEQUENCE [LARGE SCALE GENOMIC DNA]</scope>
    <source>
        <strain>AP76</strain>
    </source>
</reference>
<name>LOLA_ACTP7</name>
<sequence length="213" mass="23729">MKKLLKQSLLGFALVSMTGAAFADAQSVAELQRRLEQVSQYSADFDQTVRSSKGKQIQSGKGKFQVKRPNLFRMDTKSPQENLIVSDGANLWFYDPFVSQVTVNTVQDAVNNTPFVLLTSSDKSHWDQYDVTQNADTFVLKPKSKKSNLKQFDVRIDQSGMLKGFSTIERDGQSNLYVLRNITGGGVSSDLFKFSVPKGAELDDQRGGKKSKK</sequence>
<comment type="function">
    <text evidence="1">Participates in the translocation of lipoproteins from the inner membrane to the outer membrane. Only forms a complex with a lipoprotein if the residue after the N-terminal Cys is not an aspartate (The Asp acts as a targeting signal to indicate that the lipoprotein should stay in the inner membrane).</text>
</comment>
<comment type="subunit">
    <text evidence="1">Monomer.</text>
</comment>
<comment type="subcellular location">
    <subcellularLocation>
        <location evidence="1">Periplasm</location>
    </subcellularLocation>
</comment>
<comment type="similarity">
    <text evidence="1">Belongs to the LolA family.</text>
</comment>
<dbReference type="EMBL" id="CP001091">
    <property type="protein sequence ID" value="ACE61204.1"/>
    <property type="molecule type" value="Genomic_DNA"/>
</dbReference>
<dbReference type="RefSeq" id="WP_005600572.1">
    <property type="nucleotide sequence ID" value="NC_010939.1"/>
</dbReference>
<dbReference type="SMR" id="B3GX52"/>
<dbReference type="KEGG" id="apa:APP7_0552"/>
<dbReference type="HOGENOM" id="CLU_087560_1_1_6"/>
<dbReference type="Proteomes" id="UP000001226">
    <property type="component" value="Chromosome"/>
</dbReference>
<dbReference type="GO" id="GO:0030288">
    <property type="term" value="C:outer membrane-bounded periplasmic space"/>
    <property type="evidence" value="ECO:0007669"/>
    <property type="project" value="TreeGrafter"/>
</dbReference>
<dbReference type="GO" id="GO:0044874">
    <property type="term" value="P:lipoprotein localization to outer membrane"/>
    <property type="evidence" value="ECO:0007669"/>
    <property type="project" value="UniProtKB-UniRule"/>
</dbReference>
<dbReference type="GO" id="GO:0042953">
    <property type="term" value="P:lipoprotein transport"/>
    <property type="evidence" value="ECO:0007669"/>
    <property type="project" value="InterPro"/>
</dbReference>
<dbReference type="CDD" id="cd16325">
    <property type="entry name" value="LolA"/>
    <property type="match status" value="1"/>
</dbReference>
<dbReference type="Gene3D" id="2.50.20.10">
    <property type="entry name" value="Lipoprotein localisation LolA/LolB/LppX"/>
    <property type="match status" value="1"/>
</dbReference>
<dbReference type="HAMAP" id="MF_00240">
    <property type="entry name" value="LolA"/>
    <property type="match status" value="1"/>
</dbReference>
<dbReference type="InterPro" id="IPR029046">
    <property type="entry name" value="LolA/LolB/LppX"/>
</dbReference>
<dbReference type="InterPro" id="IPR004564">
    <property type="entry name" value="OM_lipoprot_carrier_LolA-like"/>
</dbReference>
<dbReference type="InterPro" id="IPR018323">
    <property type="entry name" value="OM_lipoprot_carrier_LolA_Pbac"/>
</dbReference>
<dbReference type="NCBIfam" id="TIGR00547">
    <property type="entry name" value="lolA"/>
    <property type="match status" value="1"/>
</dbReference>
<dbReference type="PANTHER" id="PTHR35869">
    <property type="entry name" value="OUTER-MEMBRANE LIPOPROTEIN CARRIER PROTEIN"/>
    <property type="match status" value="1"/>
</dbReference>
<dbReference type="PANTHER" id="PTHR35869:SF1">
    <property type="entry name" value="OUTER-MEMBRANE LIPOPROTEIN CARRIER PROTEIN"/>
    <property type="match status" value="1"/>
</dbReference>
<dbReference type="Pfam" id="PF03548">
    <property type="entry name" value="LolA"/>
    <property type="match status" value="1"/>
</dbReference>
<dbReference type="SUPFAM" id="SSF89392">
    <property type="entry name" value="Prokaryotic lipoproteins and lipoprotein localization factors"/>
    <property type="match status" value="1"/>
</dbReference>
<feature type="signal peptide" evidence="1">
    <location>
        <begin position="1"/>
        <end position="23"/>
    </location>
</feature>
<feature type="chain" id="PRO_1000100711" description="Outer-membrane lipoprotein carrier protein">
    <location>
        <begin position="24"/>
        <end position="213"/>
    </location>
</feature>